<name>RS2_PSECP</name>
<dbReference type="EMBL" id="CP001341">
    <property type="protein sequence ID" value="ACL39374.1"/>
    <property type="molecule type" value="Genomic_DNA"/>
</dbReference>
<dbReference type="RefSeq" id="WP_015936597.1">
    <property type="nucleotide sequence ID" value="NC_011886.1"/>
</dbReference>
<dbReference type="SMR" id="B8HFN5"/>
<dbReference type="STRING" id="452863.Achl_1384"/>
<dbReference type="KEGG" id="ach:Achl_1384"/>
<dbReference type="eggNOG" id="COG0052">
    <property type="taxonomic scope" value="Bacteria"/>
</dbReference>
<dbReference type="HOGENOM" id="CLU_040318_2_3_11"/>
<dbReference type="OrthoDB" id="9808036at2"/>
<dbReference type="Proteomes" id="UP000002505">
    <property type="component" value="Chromosome"/>
</dbReference>
<dbReference type="GO" id="GO:0022627">
    <property type="term" value="C:cytosolic small ribosomal subunit"/>
    <property type="evidence" value="ECO:0007669"/>
    <property type="project" value="TreeGrafter"/>
</dbReference>
<dbReference type="GO" id="GO:0003735">
    <property type="term" value="F:structural constituent of ribosome"/>
    <property type="evidence" value="ECO:0007669"/>
    <property type="project" value="InterPro"/>
</dbReference>
<dbReference type="GO" id="GO:0006412">
    <property type="term" value="P:translation"/>
    <property type="evidence" value="ECO:0007669"/>
    <property type="project" value="UniProtKB-UniRule"/>
</dbReference>
<dbReference type="CDD" id="cd01425">
    <property type="entry name" value="RPS2"/>
    <property type="match status" value="1"/>
</dbReference>
<dbReference type="FunFam" id="1.10.287.610:FF:000001">
    <property type="entry name" value="30S ribosomal protein S2"/>
    <property type="match status" value="1"/>
</dbReference>
<dbReference type="Gene3D" id="3.40.50.10490">
    <property type="entry name" value="Glucose-6-phosphate isomerase like protein, domain 1"/>
    <property type="match status" value="1"/>
</dbReference>
<dbReference type="Gene3D" id="1.10.287.610">
    <property type="entry name" value="Helix hairpin bin"/>
    <property type="match status" value="1"/>
</dbReference>
<dbReference type="HAMAP" id="MF_00291_B">
    <property type="entry name" value="Ribosomal_uS2_B"/>
    <property type="match status" value="1"/>
</dbReference>
<dbReference type="InterPro" id="IPR001865">
    <property type="entry name" value="Ribosomal_uS2"/>
</dbReference>
<dbReference type="InterPro" id="IPR005706">
    <property type="entry name" value="Ribosomal_uS2_bac/mit/plastid"/>
</dbReference>
<dbReference type="InterPro" id="IPR018130">
    <property type="entry name" value="Ribosomal_uS2_CS"/>
</dbReference>
<dbReference type="InterPro" id="IPR023591">
    <property type="entry name" value="Ribosomal_uS2_flav_dom_sf"/>
</dbReference>
<dbReference type="NCBIfam" id="TIGR01011">
    <property type="entry name" value="rpsB_bact"/>
    <property type="match status" value="1"/>
</dbReference>
<dbReference type="PANTHER" id="PTHR12534">
    <property type="entry name" value="30S RIBOSOMAL PROTEIN S2 PROKARYOTIC AND ORGANELLAR"/>
    <property type="match status" value="1"/>
</dbReference>
<dbReference type="PANTHER" id="PTHR12534:SF0">
    <property type="entry name" value="SMALL RIBOSOMAL SUBUNIT PROTEIN US2M"/>
    <property type="match status" value="1"/>
</dbReference>
<dbReference type="Pfam" id="PF00318">
    <property type="entry name" value="Ribosomal_S2"/>
    <property type="match status" value="1"/>
</dbReference>
<dbReference type="PRINTS" id="PR00395">
    <property type="entry name" value="RIBOSOMALS2"/>
</dbReference>
<dbReference type="SUPFAM" id="SSF52313">
    <property type="entry name" value="Ribosomal protein S2"/>
    <property type="match status" value="1"/>
</dbReference>
<dbReference type="PROSITE" id="PS00962">
    <property type="entry name" value="RIBOSOMAL_S2_1"/>
    <property type="match status" value="1"/>
</dbReference>
<sequence length="291" mass="31940">MPVVTMRQLLDSGVHFGHQTRRWNPKMKRFIFTERNGIYIIDLQQSLSYIDRAYEFVKATVAHGGTVLFVGTKKQAQEAIAEQATRVGQPYVNQRWLGGMLTNFQTVAKRIQRMKELEEIDFDDVAGSAYTKKELLLLKRELTKLESNLGGIRNLTKAPSVLWIVDTKKEHLAVDEAKKLNIPVVAILDTNCDPDEVDFPIPGNDDAIRSVNLLTRVVADAVAEGLIARNNRGSGTTEAPEEPLAEWERELLEGSKAEEAAAAAPAENAEAPAAPAAEAPAAAEAPAEDAK</sequence>
<gene>
    <name evidence="1" type="primary">rpsB</name>
    <name type="ordered locus">Achl_1384</name>
</gene>
<proteinExistence type="inferred from homology"/>
<organism>
    <name type="scientific">Pseudarthrobacter chlorophenolicus (strain ATCC 700700 / DSM 12829 / CIP 107037 / JCM 12360 / KCTC 9906 / NCIMB 13794 / A6)</name>
    <name type="common">Arthrobacter chlorophenolicus</name>
    <dbReference type="NCBI Taxonomy" id="452863"/>
    <lineage>
        <taxon>Bacteria</taxon>
        <taxon>Bacillati</taxon>
        <taxon>Actinomycetota</taxon>
        <taxon>Actinomycetes</taxon>
        <taxon>Micrococcales</taxon>
        <taxon>Micrococcaceae</taxon>
        <taxon>Pseudarthrobacter</taxon>
    </lineage>
</organism>
<keyword id="KW-0687">Ribonucleoprotein</keyword>
<keyword id="KW-0689">Ribosomal protein</keyword>
<reference key="1">
    <citation type="submission" date="2009-01" db="EMBL/GenBank/DDBJ databases">
        <title>Complete sequence of chromosome of Arthrobacter chlorophenolicus A6.</title>
        <authorList>
            <consortium name="US DOE Joint Genome Institute"/>
            <person name="Lucas S."/>
            <person name="Copeland A."/>
            <person name="Lapidus A."/>
            <person name="Glavina del Rio T."/>
            <person name="Tice H."/>
            <person name="Bruce D."/>
            <person name="Goodwin L."/>
            <person name="Pitluck S."/>
            <person name="Goltsman E."/>
            <person name="Clum A."/>
            <person name="Larimer F."/>
            <person name="Land M."/>
            <person name="Hauser L."/>
            <person name="Kyrpides N."/>
            <person name="Mikhailova N."/>
            <person name="Jansson J."/>
            <person name="Richardson P."/>
        </authorList>
    </citation>
    <scope>NUCLEOTIDE SEQUENCE [LARGE SCALE GENOMIC DNA]</scope>
    <source>
        <strain>ATCC 700700 / DSM 12829 / CIP 107037 / JCM 12360 / KCTC 9906 / NCIMB 13794 / A6</strain>
    </source>
</reference>
<feature type="chain" id="PRO_1000194314" description="Small ribosomal subunit protein uS2">
    <location>
        <begin position="1"/>
        <end position="291"/>
    </location>
</feature>
<feature type="region of interest" description="Disordered" evidence="2">
    <location>
        <begin position="231"/>
        <end position="291"/>
    </location>
</feature>
<feature type="compositionally biased region" description="Basic and acidic residues" evidence="2">
    <location>
        <begin position="246"/>
        <end position="259"/>
    </location>
</feature>
<feature type="compositionally biased region" description="Low complexity" evidence="2">
    <location>
        <begin position="260"/>
        <end position="285"/>
    </location>
</feature>
<protein>
    <recommendedName>
        <fullName evidence="1">Small ribosomal subunit protein uS2</fullName>
    </recommendedName>
    <alternativeName>
        <fullName evidence="3">30S ribosomal protein S2</fullName>
    </alternativeName>
</protein>
<comment type="similarity">
    <text evidence="1">Belongs to the universal ribosomal protein uS2 family.</text>
</comment>
<accession>B8HFN5</accession>
<evidence type="ECO:0000255" key="1">
    <source>
        <dbReference type="HAMAP-Rule" id="MF_00291"/>
    </source>
</evidence>
<evidence type="ECO:0000256" key="2">
    <source>
        <dbReference type="SAM" id="MobiDB-lite"/>
    </source>
</evidence>
<evidence type="ECO:0000305" key="3"/>